<dbReference type="EMBL" id="M97759">
    <property type="protein sequence ID" value="AAA51598.1"/>
    <property type="molecule type" value="mRNA"/>
</dbReference>
<dbReference type="EMBL" id="X68487">
    <property type="protein sequence ID" value="CAA48505.1"/>
    <property type="molecule type" value="mRNA"/>
</dbReference>
<dbReference type="EMBL" id="AY136748">
    <property type="protein sequence ID" value="AAN01274.1"/>
    <property type="molecule type" value="mRNA"/>
</dbReference>
<dbReference type="EMBL" id="BC025722">
    <property type="protein sequence ID" value="AAH25722.1"/>
    <property type="molecule type" value="mRNA"/>
</dbReference>
<dbReference type="CCDS" id="CCDS11173.1"/>
<dbReference type="PIR" id="JC1229">
    <property type="entry name" value="JC1229"/>
</dbReference>
<dbReference type="RefSeq" id="NP_000667.1">
    <property type="nucleotide sequence ID" value="NM_000676.4"/>
</dbReference>
<dbReference type="PDB" id="7XY6">
    <property type="method" value="EM"/>
    <property type="resolution" value="2.99 A"/>
    <property type="chains" value="R=2-332"/>
</dbReference>
<dbReference type="PDB" id="7XY7">
    <property type="method" value="EM"/>
    <property type="resolution" value="3.26 A"/>
    <property type="chains" value="R=2-332"/>
</dbReference>
<dbReference type="PDB" id="8HDO">
    <property type="method" value="EM"/>
    <property type="resolution" value="2.87 A"/>
    <property type="chains" value="R=1-332"/>
</dbReference>
<dbReference type="PDB" id="8HDP">
    <property type="method" value="EM"/>
    <property type="resolution" value="3.20 A"/>
    <property type="chains" value="R=1-332"/>
</dbReference>
<dbReference type="PDBsum" id="7XY6"/>
<dbReference type="PDBsum" id="7XY7"/>
<dbReference type="PDBsum" id="8HDO"/>
<dbReference type="PDBsum" id="8HDP"/>
<dbReference type="EMDB" id="EMD-33512"/>
<dbReference type="EMDB" id="EMD-33513"/>
<dbReference type="EMDB" id="EMD-34676"/>
<dbReference type="EMDB" id="EMD-34677"/>
<dbReference type="SMR" id="P29275"/>
<dbReference type="BioGRID" id="106648">
    <property type="interactions" value="46"/>
</dbReference>
<dbReference type="CORUM" id="P29275"/>
<dbReference type="FunCoup" id="P29275">
    <property type="interactions" value="1258"/>
</dbReference>
<dbReference type="IntAct" id="P29275">
    <property type="interactions" value="38"/>
</dbReference>
<dbReference type="STRING" id="9606.ENSP00000304501"/>
<dbReference type="BindingDB" id="P29275"/>
<dbReference type="ChEMBL" id="CHEMBL255"/>
<dbReference type="DrugBank" id="DB07954">
    <property type="generic name" value="3-isobutyl-1-methyl-7H-xanthine"/>
</dbReference>
<dbReference type="DrugBank" id="DB08770">
    <property type="generic name" value="4-{2-[(7-amino-2-furan-2-yl[1,2,4]triazolo[1,5-a][1,3,5]triazin-5-yl)amino]ethyl}phenol"/>
</dbReference>
<dbReference type="DrugBank" id="DB02282">
    <property type="generic name" value="5'-S-methyl-5'-thioadenosine"/>
</dbReference>
<dbReference type="DrugBank" id="DB00640">
    <property type="generic name" value="Adenosine"/>
</dbReference>
<dbReference type="DrugBank" id="DB14018">
    <property type="generic name" value="Bromotheophylline"/>
</dbReference>
<dbReference type="DrugBank" id="DB00201">
    <property type="generic name" value="Caffeine"/>
</dbReference>
<dbReference type="DrugBank" id="DB05936">
    <property type="generic name" value="CVT-6883"/>
</dbReference>
<dbReference type="DrugBank" id="DB04932">
    <property type="generic name" value="Defibrotide"/>
</dbReference>
<dbReference type="DrugBank" id="DB12946">
    <property type="generic name" value="DPCPX"/>
</dbReference>
<dbReference type="DrugBank" id="DB00824">
    <property type="generic name" value="Enprofylline"/>
</dbReference>
<dbReference type="DrugBank" id="DB17506">
    <property type="generic name" value="Etrumadenant"/>
</dbReference>
<dbReference type="DrugBank" id="DB07776">
    <property type="generic name" value="Flavone"/>
</dbReference>
<dbReference type="DrugBank" id="DB08517">
    <property type="generic name" value="Sakuranetin"/>
</dbReference>
<dbReference type="DrugBank" id="DB00277">
    <property type="generic name" value="Theophylline"/>
</dbReference>
<dbReference type="DrugBank" id="DB12569">
    <property type="generic name" value="Tonapofylline"/>
</dbReference>
<dbReference type="DrugBank" id="DB00194">
    <property type="generic name" value="Vidarabine"/>
</dbReference>
<dbReference type="DrugBank" id="DB02134">
    <property type="generic name" value="Xanthine"/>
</dbReference>
<dbReference type="DrugCentral" id="P29275"/>
<dbReference type="GuidetoPHARMACOLOGY" id="20"/>
<dbReference type="GlyCosmos" id="P29275">
    <property type="glycosylation" value="2 sites, No reported glycans"/>
</dbReference>
<dbReference type="GlyGen" id="P29275">
    <property type="glycosylation" value="2 sites"/>
</dbReference>
<dbReference type="iPTMnet" id="P29275"/>
<dbReference type="PhosphoSitePlus" id="P29275"/>
<dbReference type="BioMuta" id="ADORA2B"/>
<dbReference type="DMDM" id="112938"/>
<dbReference type="MassIVE" id="P29275"/>
<dbReference type="PaxDb" id="9606-ENSP00000304501"/>
<dbReference type="PeptideAtlas" id="P29275"/>
<dbReference type="Antibodypedia" id="25203">
    <property type="antibodies" value="296 antibodies from 36 providers"/>
</dbReference>
<dbReference type="DNASU" id="136"/>
<dbReference type="Ensembl" id="ENST00000304222.3">
    <property type="protein sequence ID" value="ENSP00000304501.2"/>
    <property type="gene ID" value="ENSG00000170425.4"/>
</dbReference>
<dbReference type="GeneID" id="136"/>
<dbReference type="KEGG" id="hsa:136"/>
<dbReference type="MANE-Select" id="ENST00000304222.3">
    <property type="protein sequence ID" value="ENSP00000304501.2"/>
    <property type="RefSeq nucleotide sequence ID" value="NM_000676.4"/>
    <property type="RefSeq protein sequence ID" value="NP_000667.1"/>
</dbReference>
<dbReference type="UCSC" id="uc002gpd.2">
    <property type="organism name" value="human"/>
</dbReference>
<dbReference type="AGR" id="HGNC:264"/>
<dbReference type="CTD" id="136"/>
<dbReference type="DisGeNET" id="136"/>
<dbReference type="GeneCards" id="ADORA2B"/>
<dbReference type="HGNC" id="HGNC:264">
    <property type="gene designation" value="ADORA2B"/>
</dbReference>
<dbReference type="HPA" id="ENSG00000170425">
    <property type="expression patterns" value="Tissue enhanced (urinary)"/>
</dbReference>
<dbReference type="MIM" id="600446">
    <property type="type" value="gene"/>
</dbReference>
<dbReference type="neXtProt" id="NX_P29275"/>
<dbReference type="OpenTargets" id="ENSG00000170425"/>
<dbReference type="PharmGKB" id="PA24585"/>
<dbReference type="VEuPathDB" id="HostDB:ENSG00000170425"/>
<dbReference type="eggNOG" id="KOG3656">
    <property type="taxonomic scope" value="Eukaryota"/>
</dbReference>
<dbReference type="GeneTree" id="ENSGT01030000234555"/>
<dbReference type="HOGENOM" id="CLU_009579_11_5_1"/>
<dbReference type="InParanoid" id="P29275"/>
<dbReference type="OMA" id="PVKCLFE"/>
<dbReference type="OrthoDB" id="9445642at2759"/>
<dbReference type="PAN-GO" id="P29275">
    <property type="GO annotations" value="4 GO annotations based on evolutionary models"/>
</dbReference>
<dbReference type="PhylomeDB" id="P29275"/>
<dbReference type="TreeFam" id="TF325296"/>
<dbReference type="PathwayCommons" id="P29275"/>
<dbReference type="Reactome" id="R-HSA-417973">
    <property type="pathway name" value="Adenosine P1 receptors"/>
</dbReference>
<dbReference type="Reactome" id="R-HSA-418555">
    <property type="pathway name" value="G alpha (s) signalling events"/>
</dbReference>
<dbReference type="Reactome" id="R-HSA-5683826">
    <property type="pathway name" value="Surfactant metabolism"/>
</dbReference>
<dbReference type="Reactome" id="R-HSA-9660821">
    <property type="pathway name" value="ADORA2B mediated anti-inflammatory cytokines production"/>
</dbReference>
<dbReference type="SignaLink" id="P29275"/>
<dbReference type="SIGNOR" id="P29275"/>
<dbReference type="BioGRID-ORCS" id="136">
    <property type="hits" value="6 hits in 1160 CRISPR screens"/>
</dbReference>
<dbReference type="ChiTaRS" id="ADORA2B">
    <property type="organism name" value="human"/>
</dbReference>
<dbReference type="GeneWiki" id="Adenosine_A2B_receptor"/>
<dbReference type="GenomeRNAi" id="136"/>
<dbReference type="Pharos" id="P29275">
    <property type="development level" value="Tclin"/>
</dbReference>
<dbReference type="PRO" id="PR:P29275"/>
<dbReference type="Proteomes" id="UP000005640">
    <property type="component" value="Chromosome 17"/>
</dbReference>
<dbReference type="RNAct" id="P29275">
    <property type="molecule type" value="protein"/>
</dbReference>
<dbReference type="Bgee" id="ENSG00000170425">
    <property type="expression patterns" value="Expressed in mucosa of transverse colon and 132 other cell types or tissues"/>
</dbReference>
<dbReference type="GO" id="GO:0098978">
    <property type="term" value="C:glutamatergic synapse"/>
    <property type="evidence" value="ECO:0007669"/>
    <property type="project" value="Ensembl"/>
</dbReference>
<dbReference type="GO" id="GO:0005886">
    <property type="term" value="C:plasma membrane"/>
    <property type="evidence" value="ECO:0000318"/>
    <property type="project" value="GO_Central"/>
</dbReference>
<dbReference type="GO" id="GO:0098793">
    <property type="term" value="C:presynapse"/>
    <property type="evidence" value="ECO:0007669"/>
    <property type="project" value="GOC"/>
</dbReference>
<dbReference type="GO" id="GO:0098685">
    <property type="term" value="C:Schaffer collateral - CA1 synapse"/>
    <property type="evidence" value="ECO:0007669"/>
    <property type="project" value="Ensembl"/>
</dbReference>
<dbReference type="GO" id="GO:0001609">
    <property type="term" value="F:G protein-coupled adenosine receptor activity"/>
    <property type="evidence" value="ECO:0007669"/>
    <property type="project" value="Ensembl"/>
</dbReference>
<dbReference type="GO" id="GO:0004930">
    <property type="term" value="F:G protein-coupled receptor activity"/>
    <property type="evidence" value="ECO:0000318"/>
    <property type="project" value="GO_Central"/>
</dbReference>
<dbReference type="GO" id="GO:0007190">
    <property type="term" value="P:activation of adenylate cyclase activity"/>
    <property type="evidence" value="ECO:0000304"/>
    <property type="project" value="ProtInc"/>
</dbReference>
<dbReference type="GO" id="GO:0007189">
    <property type="term" value="P:adenylate cyclase-activating G protein-coupled receptor signaling pathway"/>
    <property type="evidence" value="ECO:0000318"/>
    <property type="project" value="GO_Central"/>
</dbReference>
<dbReference type="GO" id="GO:0019934">
    <property type="term" value="P:cGMP-mediated signaling"/>
    <property type="evidence" value="ECO:0007669"/>
    <property type="project" value="Ensembl"/>
</dbReference>
<dbReference type="GO" id="GO:0007186">
    <property type="term" value="P:G protein-coupled receptor signaling pathway"/>
    <property type="evidence" value="ECO:0000304"/>
    <property type="project" value="ProtInc"/>
</dbReference>
<dbReference type="GO" id="GO:0043303">
    <property type="term" value="P:mast cell degranulation"/>
    <property type="evidence" value="ECO:0007669"/>
    <property type="project" value="Ensembl"/>
</dbReference>
<dbReference type="GO" id="GO:0010753">
    <property type="term" value="P:positive regulation of cGMP-mediated signaling"/>
    <property type="evidence" value="ECO:0007669"/>
    <property type="project" value="Ensembl"/>
</dbReference>
<dbReference type="GO" id="GO:0032722">
    <property type="term" value="P:positive regulation of chemokine production"/>
    <property type="evidence" value="ECO:0007669"/>
    <property type="project" value="Ensembl"/>
</dbReference>
<dbReference type="GO" id="GO:0002882">
    <property type="term" value="P:positive regulation of chronic inflammatory response to non-antigenic stimulus"/>
    <property type="evidence" value="ECO:0007669"/>
    <property type="project" value="Ensembl"/>
</dbReference>
<dbReference type="GO" id="GO:0032755">
    <property type="term" value="P:positive regulation of interleukin-6 production"/>
    <property type="evidence" value="ECO:0007669"/>
    <property type="project" value="Ensembl"/>
</dbReference>
<dbReference type="GO" id="GO:0043306">
    <property type="term" value="P:positive regulation of mast cell degranulation"/>
    <property type="evidence" value="ECO:0007669"/>
    <property type="project" value="Ensembl"/>
</dbReference>
<dbReference type="GO" id="GO:0010575">
    <property type="term" value="P:positive regulation of vascular endothelial growth factor production"/>
    <property type="evidence" value="ECO:0007669"/>
    <property type="project" value="Ensembl"/>
</dbReference>
<dbReference type="GO" id="GO:0099171">
    <property type="term" value="P:presynaptic modulation of chemical synaptic transmission"/>
    <property type="evidence" value="ECO:0007669"/>
    <property type="project" value="Ensembl"/>
</dbReference>
<dbReference type="GO" id="GO:0060087">
    <property type="term" value="P:relaxation of vascular associated smooth muscle"/>
    <property type="evidence" value="ECO:0007669"/>
    <property type="project" value="Ensembl"/>
</dbReference>
<dbReference type="GO" id="GO:0042311">
    <property type="term" value="P:vasodilation"/>
    <property type="evidence" value="ECO:0000318"/>
    <property type="project" value="GO_Central"/>
</dbReference>
<dbReference type="CDD" id="cd15069">
    <property type="entry name" value="7tmA_Adenosine_R_A2B"/>
    <property type="match status" value="1"/>
</dbReference>
<dbReference type="FunFam" id="1.20.1070.10:FF:000061">
    <property type="entry name" value="Adenosine receptor A2"/>
    <property type="match status" value="1"/>
</dbReference>
<dbReference type="Gene3D" id="1.20.1070.10">
    <property type="entry name" value="Rhodopsin 7-helix transmembrane proteins"/>
    <property type="match status" value="1"/>
</dbReference>
<dbReference type="InterPro" id="IPR001435">
    <property type="entry name" value="Adeno_A2B_rcpt"/>
</dbReference>
<dbReference type="InterPro" id="IPR001634">
    <property type="entry name" value="Adenosn_rcpt"/>
</dbReference>
<dbReference type="InterPro" id="IPR000276">
    <property type="entry name" value="GPCR_Rhodpsn"/>
</dbReference>
<dbReference type="InterPro" id="IPR017452">
    <property type="entry name" value="GPCR_Rhodpsn_7TM"/>
</dbReference>
<dbReference type="PANTHER" id="PTHR24246:SF18">
    <property type="entry name" value="ADENOSINE RECEPTOR A2B"/>
    <property type="match status" value="1"/>
</dbReference>
<dbReference type="PANTHER" id="PTHR24246">
    <property type="entry name" value="OLFACTORY RECEPTOR AND ADENOSINE RECEPTOR"/>
    <property type="match status" value="1"/>
</dbReference>
<dbReference type="Pfam" id="PF00001">
    <property type="entry name" value="7tm_1"/>
    <property type="match status" value="1"/>
</dbReference>
<dbReference type="PRINTS" id="PR00554">
    <property type="entry name" value="ADENOSINA2BR"/>
</dbReference>
<dbReference type="PRINTS" id="PR00424">
    <property type="entry name" value="ADENOSINER"/>
</dbReference>
<dbReference type="PRINTS" id="PR00237">
    <property type="entry name" value="GPCRRHODOPSN"/>
</dbReference>
<dbReference type="SMART" id="SM01381">
    <property type="entry name" value="7TM_GPCR_Srsx"/>
    <property type="match status" value="1"/>
</dbReference>
<dbReference type="SUPFAM" id="SSF81321">
    <property type="entry name" value="Family A G protein-coupled receptor-like"/>
    <property type="match status" value="1"/>
</dbReference>
<dbReference type="PROSITE" id="PS00237">
    <property type="entry name" value="G_PROTEIN_RECEP_F1_1"/>
    <property type="match status" value="1"/>
</dbReference>
<dbReference type="PROSITE" id="PS50262">
    <property type="entry name" value="G_PROTEIN_RECEP_F1_2"/>
    <property type="match status" value="1"/>
</dbReference>
<proteinExistence type="evidence at protein level"/>
<accession>P29275</accession>
<reference key="1">
    <citation type="journal article" date="1992" name="Biochem. Biophys. Res. Commun.">
        <title>Molecular cloning and expression of an adenosine A2b receptor from human brain.</title>
        <authorList>
            <person name="Pierce K.D."/>
            <person name="Furlong T.J."/>
            <person name="Selbie L.A."/>
            <person name="Shine J."/>
        </authorList>
    </citation>
    <scope>NUCLEOTIDE SEQUENCE [MRNA]</scope>
    <source>
        <tissue>Brain</tissue>
    </source>
</reference>
<reference key="2">
    <citation type="journal article" date="1995" name="Genomics">
        <title>Cloning and chromosomal localization of the human A2b adenosine receptor gene (ADORA2B) and its pseudogene.</title>
        <authorList>
            <person name="Jacobson M.A."/>
            <person name="Johnson R.G."/>
            <person name="Luneau C.J."/>
            <person name="Salvatore C.A."/>
        </authorList>
    </citation>
    <scope>NUCLEOTIDE SEQUENCE [MRNA]</scope>
    <source>
        <tissue>Brain</tissue>
    </source>
</reference>
<reference key="3">
    <citation type="submission" date="2002-07" db="EMBL/GenBank/DDBJ databases">
        <title>cDNA clones of human proteins involved in signal transduction sequenced by the Guthrie cDNA resource center (www.cdna.org).</title>
        <authorList>
            <person name="Puhl H.L. III"/>
            <person name="Ikeda S.R."/>
            <person name="Aronstam R.S."/>
        </authorList>
    </citation>
    <scope>NUCLEOTIDE SEQUENCE [LARGE SCALE MRNA]</scope>
    <source>
        <tissue>Brain</tissue>
    </source>
</reference>
<reference key="4">
    <citation type="journal article" date="2004" name="Genome Res.">
        <title>The status, quality, and expansion of the NIH full-length cDNA project: the Mammalian Gene Collection (MGC).</title>
        <authorList>
            <consortium name="The MGC Project Team"/>
        </authorList>
    </citation>
    <scope>NUCLEOTIDE SEQUENCE [LARGE SCALE MRNA]</scope>
    <source>
        <tissue>Brain</tissue>
    </source>
</reference>
<organism>
    <name type="scientific">Homo sapiens</name>
    <name type="common">Human</name>
    <dbReference type="NCBI Taxonomy" id="9606"/>
    <lineage>
        <taxon>Eukaryota</taxon>
        <taxon>Metazoa</taxon>
        <taxon>Chordata</taxon>
        <taxon>Craniata</taxon>
        <taxon>Vertebrata</taxon>
        <taxon>Euteleostomi</taxon>
        <taxon>Mammalia</taxon>
        <taxon>Eutheria</taxon>
        <taxon>Euarchontoglires</taxon>
        <taxon>Primates</taxon>
        <taxon>Haplorrhini</taxon>
        <taxon>Catarrhini</taxon>
        <taxon>Hominidae</taxon>
        <taxon>Homo</taxon>
    </lineage>
</organism>
<feature type="chain" id="PRO_0000069003" description="Adenosine receptor A2b">
    <location>
        <begin position="1"/>
        <end position="332"/>
    </location>
</feature>
<feature type="topological domain" description="Extracellular" evidence="1">
    <location>
        <begin position="1"/>
        <end position="8"/>
    </location>
</feature>
<feature type="transmembrane region" description="Helical; Name=1" evidence="1">
    <location>
        <begin position="9"/>
        <end position="33"/>
    </location>
</feature>
<feature type="topological domain" description="Cytoplasmic" evidence="1">
    <location>
        <begin position="34"/>
        <end position="43"/>
    </location>
</feature>
<feature type="transmembrane region" description="Helical; Name=2" evidence="1">
    <location>
        <begin position="44"/>
        <end position="67"/>
    </location>
</feature>
<feature type="topological domain" description="Extracellular" evidence="1">
    <location>
        <begin position="68"/>
        <end position="78"/>
    </location>
</feature>
<feature type="transmembrane region" description="Helical; Name=3" evidence="1">
    <location>
        <begin position="79"/>
        <end position="101"/>
    </location>
</feature>
<feature type="topological domain" description="Cytoplasmic" evidence="1">
    <location>
        <begin position="102"/>
        <end position="121"/>
    </location>
</feature>
<feature type="transmembrane region" description="Helical; Name=4" evidence="1">
    <location>
        <begin position="122"/>
        <end position="144"/>
    </location>
</feature>
<feature type="topological domain" description="Extracellular" evidence="1">
    <location>
        <begin position="145"/>
        <end position="178"/>
    </location>
</feature>
<feature type="transmembrane region" description="Helical; Name=5" evidence="1">
    <location>
        <begin position="179"/>
        <end position="203"/>
    </location>
</feature>
<feature type="topological domain" description="Cytoplasmic" evidence="1">
    <location>
        <begin position="204"/>
        <end position="235"/>
    </location>
</feature>
<feature type="transmembrane region" description="Helical; Name=6" evidence="1">
    <location>
        <begin position="236"/>
        <end position="259"/>
    </location>
</feature>
<feature type="topological domain" description="Extracellular" evidence="1">
    <location>
        <begin position="260"/>
        <end position="267"/>
    </location>
</feature>
<feature type="transmembrane region" description="Helical; Name=7" evidence="1">
    <location>
        <begin position="268"/>
        <end position="291"/>
    </location>
</feature>
<feature type="topological domain" description="Cytoplasmic" evidence="1">
    <location>
        <begin position="292"/>
        <end position="332"/>
    </location>
</feature>
<feature type="binding site" evidence="2">
    <location>
        <position position="174"/>
    </location>
    <ligand>
        <name>adenosine</name>
        <dbReference type="ChEBI" id="CHEBI:16335"/>
        <note>agonist</note>
    </ligand>
</feature>
<feature type="binding site" evidence="2">
    <location>
        <position position="254"/>
    </location>
    <ligand>
        <name>adenosine</name>
        <dbReference type="ChEBI" id="CHEBI:16335"/>
        <note>agonist</note>
    </ligand>
</feature>
<feature type="binding site" evidence="2">
    <location>
        <position position="279"/>
    </location>
    <ligand>
        <name>adenosine</name>
        <dbReference type="ChEBI" id="CHEBI:16335"/>
        <note>agonist</note>
    </ligand>
</feature>
<feature type="binding site" evidence="2">
    <location>
        <position position="280"/>
    </location>
    <ligand>
        <name>adenosine</name>
        <dbReference type="ChEBI" id="CHEBI:16335"/>
        <note>agonist</note>
    </ligand>
</feature>
<feature type="lipid moiety-binding region" description="S-palmitoyl cysteine" evidence="3">
    <location>
        <position position="311"/>
    </location>
</feature>
<feature type="glycosylation site" description="N-linked (GlcNAc...) asparagine" evidence="3">
    <location>
        <position position="153"/>
    </location>
</feature>
<feature type="glycosylation site" description="N-linked (GlcNAc...) asparagine" evidence="3">
    <location>
        <position position="163"/>
    </location>
</feature>
<feature type="disulfide bond" evidence="4">
    <location>
        <begin position="78"/>
        <end position="171"/>
    </location>
</feature>
<feature type="helix" evidence="6">
    <location>
        <begin position="5"/>
        <end position="34"/>
    </location>
</feature>
<feature type="helix" evidence="6">
    <location>
        <begin position="41"/>
        <end position="58"/>
    </location>
</feature>
<feature type="helix" evidence="6">
    <location>
        <begin position="60"/>
        <end position="68"/>
    </location>
</feature>
<feature type="helix" evidence="6">
    <location>
        <begin position="75"/>
        <end position="108"/>
    </location>
</feature>
<feature type="helix" evidence="6">
    <location>
        <begin position="110"/>
        <end position="116"/>
    </location>
</feature>
<feature type="helix" evidence="6">
    <location>
        <begin position="119"/>
        <end position="137"/>
    </location>
</feature>
<feature type="helix" evidence="6">
    <location>
        <begin position="139"/>
        <end position="142"/>
    </location>
</feature>
<feature type="turn" evidence="5">
    <location>
        <begin position="147"/>
        <end position="149"/>
    </location>
</feature>
<feature type="helix" evidence="6">
    <location>
        <begin position="173"/>
        <end position="176"/>
    </location>
</feature>
<feature type="helix" evidence="6">
    <location>
        <begin position="179"/>
        <end position="183"/>
    </location>
</feature>
<feature type="turn" evidence="6">
    <location>
        <begin position="184"/>
        <end position="186"/>
    </location>
</feature>
<feature type="helix" evidence="6">
    <location>
        <begin position="187"/>
        <end position="190"/>
    </location>
</feature>
<feature type="helix" evidence="6">
    <location>
        <begin position="192"/>
        <end position="214"/>
    </location>
</feature>
<feature type="helix" evidence="6">
    <location>
        <begin position="225"/>
        <end position="258"/>
    </location>
</feature>
<feature type="helix" evidence="5">
    <location>
        <begin position="262"/>
        <end position="265"/>
    </location>
</feature>
<feature type="turn" evidence="6">
    <location>
        <begin position="268"/>
        <end position="270"/>
    </location>
</feature>
<feature type="helix" evidence="6">
    <location>
        <begin position="271"/>
        <end position="289"/>
    </location>
</feature>
<feature type="turn" evidence="6">
    <location>
        <begin position="290"/>
        <end position="293"/>
    </location>
</feature>
<feature type="helix" evidence="6">
    <location>
        <begin position="295"/>
        <end position="308"/>
    </location>
</feature>
<name>AA2BR_HUMAN</name>
<keyword id="KW-0002">3D-structure</keyword>
<keyword id="KW-1003">Cell membrane</keyword>
<keyword id="KW-1015">Disulfide bond</keyword>
<keyword id="KW-0297">G-protein coupled receptor</keyword>
<keyword id="KW-0325">Glycoprotein</keyword>
<keyword id="KW-0449">Lipoprotein</keyword>
<keyword id="KW-0472">Membrane</keyword>
<keyword id="KW-0564">Palmitate</keyword>
<keyword id="KW-1267">Proteomics identification</keyword>
<keyword id="KW-0675">Receptor</keyword>
<keyword id="KW-1185">Reference proteome</keyword>
<keyword id="KW-0807">Transducer</keyword>
<keyword id="KW-0812">Transmembrane</keyword>
<keyword id="KW-1133">Transmembrane helix</keyword>
<protein>
    <recommendedName>
        <fullName>Adenosine receptor A2b</fullName>
    </recommendedName>
</protein>
<gene>
    <name type="primary">ADORA2B</name>
</gene>
<comment type="function">
    <text>Receptor for adenosine. The activity of this receptor is mediated by G proteins which activate adenylyl cyclase.</text>
</comment>
<comment type="interaction">
    <interactant intactId="EBI-3904751">
        <id>P29275</id>
    </interactant>
    <interactant intactId="EBI-2902702">
        <id>P29274</id>
        <label>ADORA2A</label>
    </interactant>
    <organismsDiffer>false</organismsDiffer>
    <experiments>5</experiments>
</comment>
<comment type="subcellular location">
    <subcellularLocation>
        <location>Cell membrane</location>
        <topology>Multi-pass membrane protein</topology>
    </subcellularLocation>
</comment>
<comment type="similarity">
    <text evidence="4">Belongs to the G-protein coupled receptor 1 family.</text>
</comment>
<evidence type="ECO:0000250" key="1"/>
<evidence type="ECO:0000250" key="2">
    <source>
        <dbReference type="UniProtKB" id="P29274"/>
    </source>
</evidence>
<evidence type="ECO:0000255" key="3"/>
<evidence type="ECO:0000255" key="4">
    <source>
        <dbReference type="PROSITE-ProRule" id="PRU00521"/>
    </source>
</evidence>
<evidence type="ECO:0007829" key="5">
    <source>
        <dbReference type="PDB" id="7XY6"/>
    </source>
</evidence>
<evidence type="ECO:0007829" key="6">
    <source>
        <dbReference type="PDB" id="8HDO"/>
    </source>
</evidence>
<sequence length="332" mass="36333">MLLETQDALYVALELVIAALSVAGNVLVCAAVGTANTLQTPTNYFLVSLAAADVAVGLFAIPFAITISLGFCTDFYGCLFLACFVLVLTQSSIFSLLAVAVDRYLAICVPLRYKSLVTGTRARGVIAVLWVLAFGIGLTPFLGWNSKDSATNNCTEPWDGTTNESCCLVKCLFENVVPMSYMVYFNFFGCVLPPLLIMLVIYIKIFLVACRQLQRTELMDHSRTTLQREIHAAKSLAMIVGIFALCWLPVHAVNCVTLFQPAQGKNKPKWAMNMAILLSHANSVVNPIVYAYRNRDFRYTFHKIISRYLLCQADVKSGNGQAGVQPALGVGL</sequence>